<gene>
    <name type="primary">ilvL</name>
    <name type="ordered locus">STY3656.1</name>
    <name type="ordered locus">t3398</name>
    <name type="ORF">STY3656A</name>
</gene>
<accession>P62526</accession>
<accession>P03060</accession>
<sequence>MTALLRVISLVVISVVVIIIPPCGAALGRGKA</sequence>
<name>LPID_SALTI</name>
<protein>
    <recommendedName>
        <fullName>ilv operon leader peptide</fullName>
    </recommendedName>
    <alternativeName>
        <fullName>ilvGMEDA operon attenuator peptide</fullName>
    </alternativeName>
</protein>
<feature type="peptide" id="PRO_0000044756" description="ilv operon leader peptide">
    <location>
        <begin position="1"/>
        <end position="32"/>
    </location>
</feature>
<reference key="1">
    <citation type="journal article" date="2001" name="Nature">
        <title>Complete genome sequence of a multiple drug resistant Salmonella enterica serovar Typhi CT18.</title>
        <authorList>
            <person name="Parkhill J."/>
            <person name="Dougan G."/>
            <person name="James K.D."/>
            <person name="Thomson N.R."/>
            <person name="Pickard D."/>
            <person name="Wain J."/>
            <person name="Churcher C.M."/>
            <person name="Mungall K.L."/>
            <person name="Bentley S.D."/>
            <person name="Holden M.T.G."/>
            <person name="Sebaihia M."/>
            <person name="Baker S."/>
            <person name="Basham D."/>
            <person name="Brooks K."/>
            <person name="Chillingworth T."/>
            <person name="Connerton P."/>
            <person name="Cronin A."/>
            <person name="Davis P."/>
            <person name="Davies R.M."/>
            <person name="Dowd L."/>
            <person name="White N."/>
            <person name="Farrar J."/>
            <person name="Feltwell T."/>
            <person name="Hamlin N."/>
            <person name="Haque A."/>
            <person name="Hien T.T."/>
            <person name="Holroyd S."/>
            <person name="Jagels K."/>
            <person name="Krogh A."/>
            <person name="Larsen T.S."/>
            <person name="Leather S."/>
            <person name="Moule S."/>
            <person name="O'Gaora P."/>
            <person name="Parry C."/>
            <person name="Quail M.A."/>
            <person name="Rutherford K.M."/>
            <person name="Simmonds M."/>
            <person name="Skelton J."/>
            <person name="Stevens K."/>
            <person name="Whitehead S."/>
            <person name="Barrell B.G."/>
        </authorList>
    </citation>
    <scope>NUCLEOTIDE SEQUENCE [LARGE SCALE GENOMIC DNA]</scope>
    <source>
        <strain>CT18</strain>
    </source>
</reference>
<reference key="2">
    <citation type="journal article" date="2003" name="J. Bacteriol.">
        <title>Comparative genomics of Salmonella enterica serovar Typhi strains Ty2 and CT18.</title>
        <authorList>
            <person name="Deng W."/>
            <person name="Liou S.-R."/>
            <person name="Plunkett G. III"/>
            <person name="Mayhew G.F."/>
            <person name="Rose D.J."/>
            <person name="Burland V."/>
            <person name="Kodoyianni V."/>
            <person name="Schwartz D.C."/>
            <person name="Blattner F.R."/>
        </authorList>
    </citation>
    <scope>NUCLEOTIDE SEQUENCE [LARGE SCALE GENOMIC DNA]</scope>
    <source>
        <strain>ATCC 700931 / Ty2</strain>
    </source>
</reference>
<keyword id="KW-0028">Amino-acid biosynthesis</keyword>
<keyword id="KW-0100">Branched-chain amino acid biosynthesis</keyword>
<keyword id="KW-0428">Leader peptide</keyword>
<organism>
    <name type="scientific">Salmonella typhi</name>
    <dbReference type="NCBI Taxonomy" id="90370"/>
    <lineage>
        <taxon>Bacteria</taxon>
        <taxon>Pseudomonadati</taxon>
        <taxon>Pseudomonadota</taxon>
        <taxon>Gammaproteobacteria</taxon>
        <taxon>Enterobacterales</taxon>
        <taxon>Enterobacteriaceae</taxon>
        <taxon>Salmonella</taxon>
    </lineage>
</organism>
<proteinExistence type="predicted"/>
<dbReference type="EMBL" id="AL513382">
    <property type="protein sequence ID" value="CAD09417.1"/>
    <property type="molecule type" value="Genomic_DNA"/>
</dbReference>
<dbReference type="EMBL" id="AE014613">
    <property type="protein sequence ID" value="AAO70922.1"/>
    <property type="molecule type" value="Genomic_DNA"/>
</dbReference>
<dbReference type="RefSeq" id="NP_457848.1">
    <property type="nucleotide sequence ID" value="NC_003198.1"/>
</dbReference>
<dbReference type="RefSeq" id="WP_001311244.1">
    <property type="nucleotide sequence ID" value="NZ_WSUR01000032.1"/>
</dbReference>
<dbReference type="STRING" id="220341.gene:17587512"/>
<dbReference type="GeneID" id="98391002"/>
<dbReference type="KEGG" id="stt:t3398"/>
<dbReference type="KEGG" id="sty:STY3656A"/>
<dbReference type="PATRIC" id="fig|220341.7.peg.3726"/>
<dbReference type="eggNOG" id="ENOG5033NES">
    <property type="taxonomic scope" value="Bacteria"/>
</dbReference>
<dbReference type="HOGENOM" id="CLU_220955_0_0_6"/>
<dbReference type="Proteomes" id="UP000000541">
    <property type="component" value="Chromosome"/>
</dbReference>
<dbReference type="Proteomes" id="UP000002670">
    <property type="component" value="Chromosome"/>
</dbReference>
<dbReference type="GO" id="GO:0008652">
    <property type="term" value="P:amino acid biosynthetic process"/>
    <property type="evidence" value="ECO:0007669"/>
    <property type="project" value="UniProtKB-KW"/>
</dbReference>
<dbReference type="GO" id="GO:0009082">
    <property type="term" value="P:branched-chain amino acid biosynthetic process"/>
    <property type="evidence" value="ECO:0007669"/>
    <property type="project" value="UniProtKB-KW"/>
</dbReference>
<dbReference type="InterPro" id="IPR012567">
    <property type="entry name" value="IlvGEDA_leader"/>
</dbReference>
<dbReference type="NCBIfam" id="NF007744">
    <property type="entry name" value="PRK10424.1"/>
    <property type="match status" value="1"/>
</dbReference>
<dbReference type="Pfam" id="PF08046">
    <property type="entry name" value="IlvGEDA_leader"/>
    <property type="match status" value="1"/>
</dbReference>